<name>SGRR_SALCH</name>
<evidence type="ECO:0000255" key="1">
    <source>
        <dbReference type="HAMAP-Rule" id="MF_01449"/>
    </source>
</evidence>
<proteinExistence type="inferred from homology"/>
<comment type="function">
    <text evidence="1">Activates the small RNA gene sgrS under glucose-phosphate stress conditions as well as yfdZ. Represses its own transcription under both stress and non-stress conditions. Might act as a sensor of the intracellular accumulation of phosphoglucose by binding these molecules in its C-terminal solute-binding domain.</text>
</comment>
<organism>
    <name type="scientific">Salmonella choleraesuis (strain SC-B67)</name>
    <dbReference type="NCBI Taxonomy" id="321314"/>
    <lineage>
        <taxon>Bacteria</taxon>
        <taxon>Pseudomonadati</taxon>
        <taxon>Pseudomonadota</taxon>
        <taxon>Gammaproteobacteria</taxon>
        <taxon>Enterobacterales</taxon>
        <taxon>Enterobacteriaceae</taxon>
        <taxon>Salmonella</taxon>
    </lineage>
</organism>
<dbReference type="EMBL" id="AE017220">
    <property type="protein sequence ID" value="AAX64009.1"/>
    <property type="molecule type" value="Genomic_DNA"/>
</dbReference>
<dbReference type="RefSeq" id="WP_001538965.1">
    <property type="nucleotide sequence ID" value="NC_006905.1"/>
</dbReference>
<dbReference type="SMR" id="Q57TF2"/>
<dbReference type="KEGG" id="sec:SCH_0103"/>
<dbReference type="HOGENOM" id="CLU_017028_12_3_6"/>
<dbReference type="Proteomes" id="UP000000538">
    <property type="component" value="Chromosome"/>
</dbReference>
<dbReference type="GO" id="GO:0003677">
    <property type="term" value="F:DNA binding"/>
    <property type="evidence" value="ECO:0007669"/>
    <property type="project" value="UniProtKB-KW"/>
</dbReference>
<dbReference type="GO" id="GO:1904680">
    <property type="term" value="F:peptide transmembrane transporter activity"/>
    <property type="evidence" value="ECO:0007669"/>
    <property type="project" value="TreeGrafter"/>
</dbReference>
<dbReference type="GO" id="GO:0045892">
    <property type="term" value="P:negative regulation of DNA-templated transcription"/>
    <property type="evidence" value="ECO:0007669"/>
    <property type="project" value="UniProtKB-UniRule"/>
</dbReference>
<dbReference type="GO" id="GO:0015833">
    <property type="term" value="P:peptide transport"/>
    <property type="evidence" value="ECO:0007669"/>
    <property type="project" value="TreeGrafter"/>
</dbReference>
<dbReference type="GO" id="GO:0045893">
    <property type="term" value="P:positive regulation of DNA-templated transcription"/>
    <property type="evidence" value="ECO:0007669"/>
    <property type="project" value="UniProtKB-UniRule"/>
</dbReference>
<dbReference type="CDD" id="cd08507">
    <property type="entry name" value="PBP2_SgrR_like"/>
    <property type="match status" value="1"/>
</dbReference>
<dbReference type="FunFam" id="3.40.190.10:FF:000070">
    <property type="entry name" value="HTH-type transcriptional regulator SgrR"/>
    <property type="match status" value="1"/>
</dbReference>
<dbReference type="Gene3D" id="3.40.190.10">
    <property type="entry name" value="Periplasmic binding protein-like II"/>
    <property type="match status" value="1"/>
</dbReference>
<dbReference type="HAMAP" id="MF_01449">
    <property type="entry name" value="HTH_type_SgrR"/>
    <property type="match status" value="1"/>
</dbReference>
<dbReference type="InterPro" id="IPR039424">
    <property type="entry name" value="SBP_5"/>
</dbReference>
<dbReference type="InterPro" id="IPR000914">
    <property type="entry name" value="SBP_5_dom"/>
</dbReference>
<dbReference type="InterPro" id="IPR025370">
    <property type="entry name" value="SgrR_HTH_N"/>
</dbReference>
<dbReference type="InterPro" id="IPR023767">
    <property type="entry name" value="Tscrpt_reg_SgrR"/>
</dbReference>
<dbReference type="InterPro" id="IPR036390">
    <property type="entry name" value="WH_DNA-bd_sf"/>
</dbReference>
<dbReference type="NCBIfam" id="NF010149">
    <property type="entry name" value="PRK13626.1"/>
    <property type="match status" value="1"/>
</dbReference>
<dbReference type="PANTHER" id="PTHR30290:SF72">
    <property type="entry name" value="HTH-TYPE TRANSCRIPTIONAL REGULATOR SGRR"/>
    <property type="match status" value="1"/>
</dbReference>
<dbReference type="PANTHER" id="PTHR30290">
    <property type="entry name" value="PERIPLASMIC BINDING COMPONENT OF ABC TRANSPORTER"/>
    <property type="match status" value="1"/>
</dbReference>
<dbReference type="Pfam" id="PF00496">
    <property type="entry name" value="SBP_bac_5"/>
    <property type="match status" value="1"/>
</dbReference>
<dbReference type="Pfam" id="PF12793">
    <property type="entry name" value="SgrR_N"/>
    <property type="match status" value="1"/>
</dbReference>
<dbReference type="SUPFAM" id="SSF53850">
    <property type="entry name" value="Periplasmic binding protein-like II"/>
    <property type="match status" value="1"/>
</dbReference>
<dbReference type="SUPFAM" id="SSF46785">
    <property type="entry name" value="Winged helix' DNA-binding domain"/>
    <property type="match status" value="1"/>
</dbReference>
<feature type="chain" id="PRO_0000309247" description="HTH-type transcriptional regulator SgrR">
    <location>
        <begin position="1"/>
        <end position="552"/>
    </location>
</feature>
<feature type="domain" description="HTH marR-type" evidence="1">
    <location>
        <begin position="1"/>
        <end position="116"/>
    </location>
</feature>
<feature type="DNA-binding region" description="H-T-H motif" evidence="1">
    <location>
        <begin position="26"/>
        <end position="49"/>
    </location>
</feature>
<feature type="region of interest" description="Solute-binding" evidence="1">
    <location>
        <begin position="163"/>
        <end position="493"/>
    </location>
</feature>
<sequence>MPSGRLQQQFIRLWQCCDGKTQDTTLNELADLLNCSRRHMRTLLNTMQARGWLTWEAEVGRGKRSRLTFLYTGLALQQQRAEDLLEQDRIDQLVQLVGDKSAVRQMLISHLGRSFRQGRHILRVLYYRPMHNLLPGTALRRSETHIARQIFSSLTRVNEENGELEADIAHHWQQISPLLWRFYLRPGIHFHHGRELEMEDVIASLTRINTLPLYSHITKIDSPTAWTLDIHLSQPDRWLPWLLGQVPAMILSREWETLANFASHPIGTGPYAVRRNTPNQLKILAFDDYFGYRALIDEVNVWVLPDISEEPACGLMLEGPIQGGEKAIESRLEKGCYYLLFDARTPRGAHPQVREWVSHVLSPTNLLYHADEPLQQLWFPAYGLLPRWHHARPGPGEKPAGLETLTLTFYREHIEHRVIARIMSALLAEHQVHLHIQEIDYDQWHAGEIESDIWLNSANFTLPLDFSLFAHLCEVPLLQNCIPRDWQDDAAQWRAGEMNLANWCQQLLANKAIVPLIHHWLIIQGQRSMRGLRMNTLGWFDFKSAWFAPPDP</sequence>
<reference key="1">
    <citation type="journal article" date="2005" name="Nucleic Acids Res.">
        <title>The genome sequence of Salmonella enterica serovar Choleraesuis, a highly invasive and resistant zoonotic pathogen.</title>
        <authorList>
            <person name="Chiu C.-H."/>
            <person name="Tang P."/>
            <person name="Chu C."/>
            <person name="Hu S."/>
            <person name="Bao Q."/>
            <person name="Yu J."/>
            <person name="Chou Y.-Y."/>
            <person name="Wang H.-S."/>
            <person name="Lee Y.-S."/>
        </authorList>
    </citation>
    <scope>NUCLEOTIDE SEQUENCE [LARGE SCALE GENOMIC DNA]</scope>
    <source>
        <strain>SC-B67</strain>
    </source>
</reference>
<protein>
    <recommendedName>
        <fullName evidence="1">HTH-type transcriptional regulator SgrR</fullName>
    </recommendedName>
</protein>
<keyword id="KW-0010">Activator</keyword>
<keyword id="KW-0238">DNA-binding</keyword>
<keyword id="KW-0678">Repressor</keyword>
<keyword id="KW-0804">Transcription</keyword>
<keyword id="KW-0805">Transcription regulation</keyword>
<accession>Q57TF2</accession>
<gene>
    <name evidence="1" type="primary">sgrR</name>
    <name type="ordered locus">SCH_0103</name>
</gene>